<feature type="chain" id="PRO_1000212034" description="Succinate--CoA ligase [ADP-forming] subunit beta">
    <location>
        <begin position="1"/>
        <end position="389"/>
    </location>
</feature>
<feature type="domain" description="ATP-grasp" evidence="1">
    <location>
        <begin position="9"/>
        <end position="244"/>
    </location>
</feature>
<feature type="binding site" evidence="1">
    <location>
        <position position="46"/>
    </location>
    <ligand>
        <name>ATP</name>
        <dbReference type="ChEBI" id="CHEBI:30616"/>
    </ligand>
</feature>
<feature type="binding site" evidence="1">
    <location>
        <begin position="53"/>
        <end position="55"/>
    </location>
    <ligand>
        <name>ATP</name>
        <dbReference type="ChEBI" id="CHEBI:30616"/>
    </ligand>
</feature>
<feature type="binding site" evidence="1">
    <location>
        <position position="99"/>
    </location>
    <ligand>
        <name>ATP</name>
        <dbReference type="ChEBI" id="CHEBI:30616"/>
    </ligand>
</feature>
<feature type="binding site" evidence="1">
    <location>
        <position position="102"/>
    </location>
    <ligand>
        <name>ATP</name>
        <dbReference type="ChEBI" id="CHEBI:30616"/>
    </ligand>
</feature>
<feature type="binding site" evidence="1">
    <location>
        <position position="107"/>
    </location>
    <ligand>
        <name>ATP</name>
        <dbReference type="ChEBI" id="CHEBI:30616"/>
    </ligand>
</feature>
<feature type="binding site" evidence="1">
    <location>
        <position position="199"/>
    </location>
    <ligand>
        <name>Mg(2+)</name>
        <dbReference type="ChEBI" id="CHEBI:18420"/>
    </ligand>
</feature>
<feature type="binding site" evidence="1">
    <location>
        <position position="213"/>
    </location>
    <ligand>
        <name>Mg(2+)</name>
        <dbReference type="ChEBI" id="CHEBI:18420"/>
    </ligand>
</feature>
<feature type="binding site" evidence="1">
    <location>
        <position position="264"/>
    </location>
    <ligand>
        <name>substrate</name>
        <note>ligand shared with subunit alpha</note>
    </ligand>
</feature>
<feature type="binding site" evidence="1">
    <location>
        <begin position="321"/>
        <end position="323"/>
    </location>
    <ligand>
        <name>substrate</name>
        <note>ligand shared with subunit alpha</note>
    </ligand>
</feature>
<reference key="1">
    <citation type="submission" date="2009-05" db="EMBL/GenBank/DDBJ databases">
        <title>Complete sequence of Tolumonas auensis DSM 9187.</title>
        <authorList>
            <consortium name="US DOE Joint Genome Institute"/>
            <person name="Lucas S."/>
            <person name="Copeland A."/>
            <person name="Lapidus A."/>
            <person name="Glavina del Rio T."/>
            <person name="Tice H."/>
            <person name="Bruce D."/>
            <person name="Goodwin L."/>
            <person name="Pitluck S."/>
            <person name="Chertkov O."/>
            <person name="Brettin T."/>
            <person name="Detter J.C."/>
            <person name="Han C."/>
            <person name="Larimer F."/>
            <person name="Land M."/>
            <person name="Hauser L."/>
            <person name="Kyrpides N."/>
            <person name="Mikhailova N."/>
            <person name="Spring S."/>
            <person name="Beller H."/>
        </authorList>
    </citation>
    <scope>NUCLEOTIDE SEQUENCE [LARGE SCALE GENOMIC DNA]</scope>
    <source>
        <strain>DSM 9187 / NBRC 110442 / TA 4</strain>
    </source>
</reference>
<proteinExistence type="inferred from homology"/>
<dbReference type="EC" id="6.2.1.5" evidence="1"/>
<dbReference type="EMBL" id="CP001616">
    <property type="protein sequence ID" value="ACQ93825.1"/>
    <property type="molecule type" value="Genomic_DNA"/>
</dbReference>
<dbReference type="RefSeq" id="WP_015879293.1">
    <property type="nucleotide sequence ID" value="NC_012691.1"/>
</dbReference>
<dbReference type="SMR" id="C4L8V5"/>
<dbReference type="STRING" id="595494.Tola_2227"/>
<dbReference type="KEGG" id="tau:Tola_2227"/>
<dbReference type="eggNOG" id="COG0045">
    <property type="taxonomic scope" value="Bacteria"/>
</dbReference>
<dbReference type="HOGENOM" id="CLU_037430_0_0_6"/>
<dbReference type="OrthoDB" id="9802602at2"/>
<dbReference type="UniPathway" id="UPA00223">
    <property type="reaction ID" value="UER00999"/>
</dbReference>
<dbReference type="Proteomes" id="UP000009073">
    <property type="component" value="Chromosome"/>
</dbReference>
<dbReference type="GO" id="GO:0005829">
    <property type="term" value="C:cytosol"/>
    <property type="evidence" value="ECO:0007669"/>
    <property type="project" value="TreeGrafter"/>
</dbReference>
<dbReference type="GO" id="GO:0042709">
    <property type="term" value="C:succinate-CoA ligase complex"/>
    <property type="evidence" value="ECO:0007669"/>
    <property type="project" value="TreeGrafter"/>
</dbReference>
<dbReference type="GO" id="GO:0005524">
    <property type="term" value="F:ATP binding"/>
    <property type="evidence" value="ECO:0007669"/>
    <property type="project" value="UniProtKB-UniRule"/>
</dbReference>
<dbReference type="GO" id="GO:0000287">
    <property type="term" value="F:magnesium ion binding"/>
    <property type="evidence" value="ECO:0007669"/>
    <property type="project" value="UniProtKB-UniRule"/>
</dbReference>
<dbReference type="GO" id="GO:0004775">
    <property type="term" value="F:succinate-CoA ligase (ADP-forming) activity"/>
    <property type="evidence" value="ECO:0007669"/>
    <property type="project" value="UniProtKB-UniRule"/>
</dbReference>
<dbReference type="GO" id="GO:0004776">
    <property type="term" value="F:succinate-CoA ligase (GDP-forming) activity"/>
    <property type="evidence" value="ECO:0007669"/>
    <property type="project" value="RHEA"/>
</dbReference>
<dbReference type="GO" id="GO:0006104">
    <property type="term" value="P:succinyl-CoA metabolic process"/>
    <property type="evidence" value="ECO:0007669"/>
    <property type="project" value="TreeGrafter"/>
</dbReference>
<dbReference type="GO" id="GO:0006099">
    <property type="term" value="P:tricarboxylic acid cycle"/>
    <property type="evidence" value="ECO:0007669"/>
    <property type="project" value="UniProtKB-UniRule"/>
</dbReference>
<dbReference type="FunFam" id="3.30.1490.20:FF:000002">
    <property type="entry name" value="Succinate--CoA ligase [ADP-forming] subunit beta"/>
    <property type="match status" value="1"/>
</dbReference>
<dbReference type="FunFam" id="3.30.470.20:FF:000002">
    <property type="entry name" value="Succinate--CoA ligase [ADP-forming] subunit beta"/>
    <property type="match status" value="1"/>
</dbReference>
<dbReference type="FunFam" id="3.40.50.261:FF:000001">
    <property type="entry name" value="Succinate--CoA ligase [ADP-forming] subunit beta"/>
    <property type="match status" value="1"/>
</dbReference>
<dbReference type="Gene3D" id="3.30.1490.20">
    <property type="entry name" value="ATP-grasp fold, A domain"/>
    <property type="match status" value="1"/>
</dbReference>
<dbReference type="Gene3D" id="3.30.470.20">
    <property type="entry name" value="ATP-grasp fold, B domain"/>
    <property type="match status" value="1"/>
</dbReference>
<dbReference type="Gene3D" id="3.40.50.261">
    <property type="entry name" value="Succinyl-CoA synthetase domains"/>
    <property type="match status" value="1"/>
</dbReference>
<dbReference type="HAMAP" id="MF_00558">
    <property type="entry name" value="Succ_CoA_beta"/>
    <property type="match status" value="1"/>
</dbReference>
<dbReference type="InterPro" id="IPR011761">
    <property type="entry name" value="ATP-grasp"/>
</dbReference>
<dbReference type="InterPro" id="IPR013650">
    <property type="entry name" value="ATP-grasp_succ-CoA_synth-type"/>
</dbReference>
<dbReference type="InterPro" id="IPR013815">
    <property type="entry name" value="ATP_grasp_subdomain_1"/>
</dbReference>
<dbReference type="InterPro" id="IPR017866">
    <property type="entry name" value="Succ-CoA_synthase_bsu_CS"/>
</dbReference>
<dbReference type="InterPro" id="IPR005811">
    <property type="entry name" value="SUCC_ACL_C"/>
</dbReference>
<dbReference type="InterPro" id="IPR005809">
    <property type="entry name" value="Succ_CoA_ligase-like_bsu"/>
</dbReference>
<dbReference type="InterPro" id="IPR016102">
    <property type="entry name" value="Succinyl-CoA_synth-like"/>
</dbReference>
<dbReference type="NCBIfam" id="NF001913">
    <property type="entry name" value="PRK00696.1"/>
    <property type="match status" value="1"/>
</dbReference>
<dbReference type="NCBIfam" id="TIGR01016">
    <property type="entry name" value="sucCoAbeta"/>
    <property type="match status" value="1"/>
</dbReference>
<dbReference type="PANTHER" id="PTHR11815:SF10">
    <property type="entry name" value="SUCCINATE--COA LIGASE [GDP-FORMING] SUBUNIT BETA, MITOCHONDRIAL"/>
    <property type="match status" value="1"/>
</dbReference>
<dbReference type="PANTHER" id="PTHR11815">
    <property type="entry name" value="SUCCINYL-COA SYNTHETASE BETA CHAIN"/>
    <property type="match status" value="1"/>
</dbReference>
<dbReference type="Pfam" id="PF08442">
    <property type="entry name" value="ATP-grasp_2"/>
    <property type="match status" value="1"/>
</dbReference>
<dbReference type="Pfam" id="PF00549">
    <property type="entry name" value="Ligase_CoA"/>
    <property type="match status" value="1"/>
</dbReference>
<dbReference type="PIRSF" id="PIRSF001554">
    <property type="entry name" value="SucCS_beta"/>
    <property type="match status" value="1"/>
</dbReference>
<dbReference type="SUPFAM" id="SSF56059">
    <property type="entry name" value="Glutathione synthetase ATP-binding domain-like"/>
    <property type="match status" value="1"/>
</dbReference>
<dbReference type="SUPFAM" id="SSF52210">
    <property type="entry name" value="Succinyl-CoA synthetase domains"/>
    <property type="match status" value="1"/>
</dbReference>
<dbReference type="PROSITE" id="PS50975">
    <property type="entry name" value="ATP_GRASP"/>
    <property type="match status" value="1"/>
</dbReference>
<dbReference type="PROSITE" id="PS01217">
    <property type="entry name" value="SUCCINYL_COA_LIG_3"/>
    <property type="match status" value="1"/>
</dbReference>
<name>SUCC_TOLAT</name>
<protein>
    <recommendedName>
        <fullName evidence="1">Succinate--CoA ligase [ADP-forming] subunit beta</fullName>
        <ecNumber evidence="1">6.2.1.5</ecNumber>
    </recommendedName>
    <alternativeName>
        <fullName evidence="1">Succinyl-CoA synthetase subunit beta</fullName>
        <shortName evidence="1">SCS-beta</shortName>
    </alternativeName>
</protein>
<gene>
    <name evidence="1" type="primary">sucC</name>
    <name type="ordered locus">Tola_2227</name>
</gene>
<sequence>MNLHEYQAKQLFADYGLPVPSGIPCSSADEAVAATKKLGGDKWVVKCQVHAGGRGKAGGVKVAGSEQEVRAFADQWLGKRLVTYQTDANGQPVNTILVETCGNIAKELYLGAVIDRSSRRVVFMASTEGGMDIETVAHNTPELIHKAALDPLTGPQPYQARELGFKLGLNAEQLKQFTKIFLGLGKMFVACDLSLLEINPLVITGEGNLLCLDGKINIDSNALYRQPKLKAWNDETQEDPREVEAARWDLNYVALDGNIGCMVNGAGLAMGTMDIIKHHGGFPANFLDVGGGATKERVTEAFKLILSDSKVKAVLVNIFGGIVRCDLIADGVIGAVAEVGVKVPVVVRLEGNNADLGSKKLAESGLNIIAATSLTDAAEQVVKAAEAVA</sequence>
<comment type="function">
    <text evidence="1">Succinyl-CoA synthetase functions in the citric acid cycle (TCA), coupling the hydrolysis of succinyl-CoA to the synthesis of either ATP or GTP and thus represents the only step of substrate-level phosphorylation in the TCA. The beta subunit provides nucleotide specificity of the enzyme and binds the substrate succinate, while the binding sites for coenzyme A and phosphate are found in the alpha subunit.</text>
</comment>
<comment type="catalytic activity">
    <reaction evidence="1">
        <text>succinate + ATP + CoA = succinyl-CoA + ADP + phosphate</text>
        <dbReference type="Rhea" id="RHEA:17661"/>
        <dbReference type="ChEBI" id="CHEBI:30031"/>
        <dbReference type="ChEBI" id="CHEBI:30616"/>
        <dbReference type="ChEBI" id="CHEBI:43474"/>
        <dbReference type="ChEBI" id="CHEBI:57287"/>
        <dbReference type="ChEBI" id="CHEBI:57292"/>
        <dbReference type="ChEBI" id="CHEBI:456216"/>
        <dbReference type="EC" id="6.2.1.5"/>
    </reaction>
    <physiologicalReaction direction="right-to-left" evidence="1">
        <dbReference type="Rhea" id="RHEA:17663"/>
    </physiologicalReaction>
</comment>
<comment type="catalytic activity">
    <reaction evidence="1">
        <text>GTP + succinate + CoA = succinyl-CoA + GDP + phosphate</text>
        <dbReference type="Rhea" id="RHEA:22120"/>
        <dbReference type="ChEBI" id="CHEBI:30031"/>
        <dbReference type="ChEBI" id="CHEBI:37565"/>
        <dbReference type="ChEBI" id="CHEBI:43474"/>
        <dbReference type="ChEBI" id="CHEBI:57287"/>
        <dbReference type="ChEBI" id="CHEBI:57292"/>
        <dbReference type="ChEBI" id="CHEBI:58189"/>
    </reaction>
    <physiologicalReaction direction="right-to-left" evidence="1">
        <dbReference type="Rhea" id="RHEA:22122"/>
    </physiologicalReaction>
</comment>
<comment type="cofactor">
    <cofactor evidence="1">
        <name>Mg(2+)</name>
        <dbReference type="ChEBI" id="CHEBI:18420"/>
    </cofactor>
    <text evidence="1">Binds 1 Mg(2+) ion per subunit.</text>
</comment>
<comment type="pathway">
    <text evidence="1">Carbohydrate metabolism; tricarboxylic acid cycle; succinate from succinyl-CoA (ligase route): step 1/1.</text>
</comment>
<comment type="subunit">
    <text evidence="1">Heterotetramer of two alpha and two beta subunits.</text>
</comment>
<comment type="similarity">
    <text evidence="1">Belongs to the succinate/malate CoA ligase beta subunit family.</text>
</comment>
<organism>
    <name type="scientific">Tolumonas auensis (strain DSM 9187 / NBRC 110442 / TA 4)</name>
    <dbReference type="NCBI Taxonomy" id="595494"/>
    <lineage>
        <taxon>Bacteria</taxon>
        <taxon>Pseudomonadati</taxon>
        <taxon>Pseudomonadota</taxon>
        <taxon>Gammaproteobacteria</taxon>
        <taxon>Aeromonadales</taxon>
        <taxon>Aeromonadaceae</taxon>
        <taxon>Tolumonas</taxon>
    </lineage>
</organism>
<accession>C4L8V5</accession>
<evidence type="ECO:0000255" key="1">
    <source>
        <dbReference type="HAMAP-Rule" id="MF_00558"/>
    </source>
</evidence>
<keyword id="KW-0067">ATP-binding</keyword>
<keyword id="KW-0436">Ligase</keyword>
<keyword id="KW-0460">Magnesium</keyword>
<keyword id="KW-0479">Metal-binding</keyword>
<keyword id="KW-0547">Nucleotide-binding</keyword>
<keyword id="KW-1185">Reference proteome</keyword>
<keyword id="KW-0816">Tricarboxylic acid cycle</keyword>